<comment type="function">
    <text evidence="1">Involved in the restart of stalled replication forks, which reloads the replicative helicase on sites other than the origin of replication; the PriA-PriB pathway is the major replication restart pathway. During primosome assembly it facilitates complex formation between PriA and DnaT on DNA; stabilizes PriA on DNA. Stimulates the DNA unwinding activity of PriA helicase.</text>
</comment>
<comment type="subunit">
    <text evidence="1">Homodimer. Interacts with PriA and DnaT. Component of the replication restart primosome. Primosome assembly occurs via a 'hand-off' mechanism. PriA binds to replication forks, subsequently PriB then DnaT bind; DnaT then displaces ssDNA to generate the helicase loading substrate.</text>
</comment>
<comment type="similarity">
    <text evidence="1">Belongs to the PriB family.</text>
</comment>
<sequence>MTTNNLVLSGTITRSRRFKSPAGIAHSVIMLEHKSQRYEADMLRNVYVQIQVILSGPRFESVAEDLKAGVEVQVQGFMTLQQGRNGQNRLVIHAENVELKT</sequence>
<proteinExistence type="inferred from homology"/>
<keyword id="KW-0235">DNA replication</keyword>
<keyword id="KW-0238">DNA-binding</keyword>
<keyword id="KW-0639">Primosome</keyword>
<accession>A6WJ80</accession>
<protein>
    <recommendedName>
        <fullName evidence="1">Replication restart protein PriB</fullName>
    </recommendedName>
</protein>
<reference key="1">
    <citation type="submission" date="2007-07" db="EMBL/GenBank/DDBJ databases">
        <title>Complete sequence of chromosome of Shewanella baltica OS185.</title>
        <authorList>
            <consortium name="US DOE Joint Genome Institute"/>
            <person name="Copeland A."/>
            <person name="Lucas S."/>
            <person name="Lapidus A."/>
            <person name="Barry K."/>
            <person name="Glavina del Rio T."/>
            <person name="Dalin E."/>
            <person name="Tice H."/>
            <person name="Pitluck S."/>
            <person name="Sims D."/>
            <person name="Brettin T."/>
            <person name="Bruce D."/>
            <person name="Detter J.C."/>
            <person name="Han C."/>
            <person name="Schmutz J."/>
            <person name="Larimer F."/>
            <person name="Land M."/>
            <person name="Hauser L."/>
            <person name="Kyrpides N."/>
            <person name="Mikhailova N."/>
            <person name="Brettar I."/>
            <person name="Rodrigues J."/>
            <person name="Konstantinidis K."/>
            <person name="Tiedje J."/>
            <person name="Richardson P."/>
        </authorList>
    </citation>
    <scope>NUCLEOTIDE SEQUENCE [LARGE SCALE GENOMIC DNA]</scope>
    <source>
        <strain>OS185</strain>
    </source>
</reference>
<feature type="chain" id="PRO_1000083292" description="Replication restart protein PriB">
    <location>
        <begin position="1"/>
        <end position="101"/>
    </location>
</feature>
<feature type="domain" description="SSB" evidence="1">
    <location>
        <begin position="1"/>
        <end position="101"/>
    </location>
</feature>
<evidence type="ECO:0000255" key="1">
    <source>
        <dbReference type="HAMAP-Rule" id="MF_00720"/>
    </source>
</evidence>
<organism>
    <name type="scientific">Shewanella baltica (strain OS185)</name>
    <dbReference type="NCBI Taxonomy" id="402882"/>
    <lineage>
        <taxon>Bacteria</taxon>
        <taxon>Pseudomonadati</taxon>
        <taxon>Pseudomonadota</taxon>
        <taxon>Gammaproteobacteria</taxon>
        <taxon>Alteromonadales</taxon>
        <taxon>Shewanellaceae</taxon>
        <taxon>Shewanella</taxon>
    </lineage>
</organism>
<gene>
    <name evidence="1" type="primary">priB</name>
    <name type="ordered locus">Shew185_0712</name>
</gene>
<name>PRIB_SHEB8</name>
<dbReference type="EMBL" id="CP000753">
    <property type="protein sequence ID" value="ABS06869.1"/>
    <property type="molecule type" value="Genomic_DNA"/>
</dbReference>
<dbReference type="RefSeq" id="WP_006083043.1">
    <property type="nucleotide sequence ID" value="NC_009665.1"/>
</dbReference>
<dbReference type="SMR" id="A6WJ80"/>
<dbReference type="GeneID" id="11771053"/>
<dbReference type="KEGG" id="sbm:Shew185_0712"/>
<dbReference type="HOGENOM" id="CLU_166075_0_0_6"/>
<dbReference type="GO" id="GO:1990077">
    <property type="term" value="C:primosome complex"/>
    <property type="evidence" value="ECO:0007669"/>
    <property type="project" value="UniProtKB-KW"/>
</dbReference>
<dbReference type="GO" id="GO:0003697">
    <property type="term" value="F:single-stranded DNA binding"/>
    <property type="evidence" value="ECO:0007669"/>
    <property type="project" value="UniProtKB-UniRule"/>
</dbReference>
<dbReference type="GO" id="GO:0006269">
    <property type="term" value="P:DNA replication, synthesis of primer"/>
    <property type="evidence" value="ECO:0007669"/>
    <property type="project" value="UniProtKB-KW"/>
</dbReference>
<dbReference type="FunFam" id="2.40.50.140:FF:000332">
    <property type="entry name" value="Primosomal replication protein N"/>
    <property type="match status" value="1"/>
</dbReference>
<dbReference type="Gene3D" id="2.40.50.140">
    <property type="entry name" value="Nucleic acid-binding proteins"/>
    <property type="match status" value="1"/>
</dbReference>
<dbReference type="HAMAP" id="MF_00720">
    <property type="entry name" value="PriB"/>
    <property type="match status" value="1"/>
</dbReference>
<dbReference type="InterPro" id="IPR012340">
    <property type="entry name" value="NA-bd_OB-fold"/>
</dbReference>
<dbReference type="InterPro" id="IPR000424">
    <property type="entry name" value="Primosome_PriB/ssb"/>
</dbReference>
<dbReference type="InterPro" id="IPR023646">
    <property type="entry name" value="Prisomal_replication_PriB"/>
</dbReference>
<dbReference type="NCBIfam" id="TIGR04418">
    <property type="entry name" value="PriB_gamma"/>
    <property type="match status" value="1"/>
</dbReference>
<dbReference type="Pfam" id="PF22657">
    <property type="entry name" value="SSB_1"/>
    <property type="match status" value="1"/>
</dbReference>
<dbReference type="PIRSF" id="PIRSF003135">
    <property type="entry name" value="Primosomal_n"/>
    <property type="match status" value="1"/>
</dbReference>
<dbReference type="SUPFAM" id="SSF50249">
    <property type="entry name" value="Nucleic acid-binding proteins"/>
    <property type="match status" value="1"/>
</dbReference>
<dbReference type="PROSITE" id="PS50935">
    <property type="entry name" value="SSB"/>
    <property type="match status" value="1"/>
</dbReference>